<protein>
    <recommendedName>
        <fullName evidence="2">Probable transport accessory protein MmpS4</fullName>
    </recommendedName>
</protein>
<reference key="1">
    <citation type="submission" date="1995-04" db="EMBL/GenBank/DDBJ databases">
        <authorList>
            <person name="Smith D.R."/>
            <person name="Robison K."/>
        </authorList>
    </citation>
    <scope>NUCLEOTIDE SEQUENCE [GENOMIC DNA]</scope>
</reference>
<reference key="2">
    <citation type="journal article" date="2001" name="Nature">
        <title>Massive gene decay in the leprosy bacillus.</title>
        <authorList>
            <person name="Cole S.T."/>
            <person name="Eiglmeier K."/>
            <person name="Parkhill J."/>
            <person name="James K.D."/>
            <person name="Thomson N.R."/>
            <person name="Wheeler P.R."/>
            <person name="Honore N."/>
            <person name="Garnier T."/>
            <person name="Churcher C.M."/>
            <person name="Harris D.E."/>
            <person name="Mungall K.L."/>
            <person name="Basham D."/>
            <person name="Brown D."/>
            <person name="Chillingworth T."/>
            <person name="Connor R."/>
            <person name="Davies R.M."/>
            <person name="Devlin K."/>
            <person name="Duthoy S."/>
            <person name="Feltwell T."/>
            <person name="Fraser A."/>
            <person name="Hamlin N."/>
            <person name="Holroyd S."/>
            <person name="Hornsby T."/>
            <person name="Jagels K."/>
            <person name="Lacroix C."/>
            <person name="Maclean J."/>
            <person name="Moule S."/>
            <person name="Murphy L.D."/>
            <person name="Oliver K."/>
            <person name="Quail M.A."/>
            <person name="Rajandream M.A."/>
            <person name="Rutherford K.M."/>
            <person name="Rutter S."/>
            <person name="Seeger K."/>
            <person name="Simon S."/>
            <person name="Simmonds M."/>
            <person name="Skelton J."/>
            <person name="Squares R."/>
            <person name="Squares S."/>
            <person name="Stevens K."/>
            <person name="Taylor K."/>
            <person name="Whitehead S."/>
            <person name="Woodward J.R."/>
            <person name="Barrell B.G."/>
        </authorList>
    </citation>
    <scope>NUCLEOTIDE SEQUENCE [LARGE SCALE GENOMIC DNA]</scope>
    <source>
        <strain>TN</strain>
    </source>
</reference>
<feature type="chain" id="PRO_0000216157" description="Probable transport accessory protein MmpS4">
    <location>
        <begin position="1"/>
        <end position="154"/>
    </location>
</feature>
<feature type="transmembrane region" description="Helical" evidence="1">
    <location>
        <begin position="19"/>
        <end position="39"/>
    </location>
</feature>
<feature type="transmembrane region" description="Helical" evidence="1">
    <location>
        <begin position="97"/>
        <end position="117"/>
    </location>
</feature>
<accession>P54880</accession>
<organism>
    <name type="scientific">Mycobacterium leprae (strain TN)</name>
    <dbReference type="NCBI Taxonomy" id="272631"/>
    <lineage>
        <taxon>Bacteria</taxon>
        <taxon>Bacillati</taxon>
        <taxon>Actinomycetota</taxon>
        <taxon>Actinomycetes</taxon>
        <taxon>Mycobacteriales</taxon>
        <taxon>Mycobacteriaceae</taxon>
        <taxon>Mycobacterium</taxon>
    </lineage>
</organism>
<name>MMPS4_MYCLE</name>
<sequence length="154" mass="16863">MSKRQRGKGISIFKLLSRIWIPLVILVVLVVGGFVVYRVHSYFASEKRESYADSNLGSSKPFNPKQIVYEVFGPPGTVADISYFDANSDPQRIDGAQLPWSLLMTTTLAAVMGNLVAQGNTDSIGCRIIVDGVVKAERVSNEVNAYTYCLVKSA</sequence>
<comment type="subcellular location">
    <subcellularLocation>
        <location evidence="2">Cell membrane</location>
        <topology evidence="1">Multi-pass membrane protein</topology>
    </subcellularLocation>
</comment>
<comment type="similarity">
    <text evidence="2">Belongs to the MmpS family.</text>
</comment>
<proteinExistence type="inferred from homology"/>
<keyword id="KW-1003">Cell membrane</keyword>
<keyword id="KW-0472">Membrane</keyword>
<keyword id="KW-1185">Reference proteome</keyword>
<keyword id="KW-0812">Transmembrane</keyword>
<keyword id="KW-1133">Transmembrane helix</keyword>
<evidence type="ECO:0000255" key="1"/>
<evidence type="ECO:0000305" key="2"/>
<dbReference type="EMBL" id="U15183">
    <property type="protein sequence ID" value="AAA63005.1"/>
    <property type="molecule type" value="Genomic_DNA"/>
</dbReference>
<dbReference type="EMBL" id="AL583925">
    <property type="protein sequence ID" value="CAC31893.1"/>
    <property type="molecule type" value="Genomic_DNA"/>
</dbReference>
<dbReference type="PIR" id="E87206">
    <property type="entry name" value="E87206"/>
</dbReference>
<dbReference type="RefSeq" id="NP_302540.1">
    <property type="nucleotide sequence ID" value="NC_002677.1"/>
</dbReference>
<dbReference type="SMR" id="P54880"/>
<dbReference type="KEGG" id="mle:ML2377"/>
<dbReference type="PATRIC" id="fig|272631.5.peg.4574"/>
<dbReference type="Leproma" id="ML2377"/>
<dbReference type="eggNOG" id="ENOG50329VV">
    <property type="taxonomic scope" value="Bacteria"/>
</dbReference>
<dbReference type="HOGENOM" id="CLU_119497_0_0_11"/>
<dbReference type="OrthoDB" id="3398257at2"/>
<dbReference type="Proteomes" id="UP000000806">
    <property type="component" value="Chromosome"/>
</dbReference>
<dbReference type="GO" id="GO:0005886">
    <property type="term" value="C:plasma membrane"/>
    <property type="evidence" value="ECO:0007669"/>
    <property type="project" value="UniProtKB-SubCell"/>
</dbReference>
<dbReference type="Gene3D" id="2.60.40.2880">
    <property type="entry name" value="MmpS1-5, C-terminal soluble domain"/>
    <property type="match status" value="1"/>
</dbReference>
<dbReference type="InterPro" id="IPR008693">
    <property type="entry name" value="MmpS"/>
</dbReference>
<dbReference type="InterPro" id="IPR038468">
    <property type="entry name" value="MmpS_C"/>
</dbReference>
<dbReference type="Pfam" id="PF05423">
    <property type="entry name" value="Mycobact_memb"/>
    <property type="match status" value="1"/>
</dbReference>
<gene>
    <name type="ordered locus">ML2377</name>
    <name type="ORF">u1740w</name>
</gene>